<organism>
    <name type="scientific">Bovine immunodeficiency virus (strain R29)</name>
    <name type="common">BIV</name>
    <name type="synonym">Bovine immunodeficiency-like virus</name>
    <dbReference type="NCBI Taxonomy" id="417296"/>
    <lineage>
        <taxon>Viruses</taxon>
        <taxon>Riboviria</taxon>
        <taxon>Pararnavirae</taxon>
        <taxon>Artverviricota</taxon>
        <taxon>Revtraviricetes</taxon>
        <taxon>Ortervirales</taxon>
        <taxon>Retroviridae</taxon>
        <taxon>Orthoretrovirinae</taxon>
        <taxon>Lentivirus</taxon>
        <taxon>Bovine immunodeficiency virus</taxon>
    </lineage>
</organism>
<keyword id="KW-0167">Capsid protein</keyword>
<keyword id="KW-1176">Cytoplasmic inwards viral transport</keyword>
<keyword id="KW-0945">Host-virus interaction</keyword>
<keyword id="KW-0479">Metal-binding</keyword>
<keyword id="KW-1177">Microtubular inwards viral transport</keyword>
<keyword id="KW-0677">Repeat</keyword>
<keyword id="KW-0688">Ribosomal frameshifting</keyword>
<keyword id="KW-1198">Viral budding</keyword>
<keyword id="KW-1187">Viral budding via the host ESCRT complexes</keyword>
<keyword id="KW-0468">Viral matrix protein</keyword>
<keyword id="KW-0543">Viral nucleoprotein</keyword>
<keyword id="KW-1188">Viral release from host cell</keyword>
<keyword id="KW-0946">Virion</keyword>
<keyword id="KW-0917">Virion maturation</keyword>
<keyword id="KW-1160">Virus entry into host cell</keyword>
<keyword id="KW-0862">Zinc</keyword>
<keyword id="KW-0863">Zinc-finger</keyword>
<name>GAG_BIV29</name>
<comment type="function">
    <text evidence="1">Matrix protein p16 forms the outer shell of the core of the virus, lining the inner surface of the viral membrane.</text>
</comment>
<comment type="function">
    <text evidence="5">Capsid protein p26 forms the conical core of the virus that encapsulates the genomic RNA-nucleocapsid complex. Interaction between incoming particle-associated Gag proteins and host dynein allows intracellular microtubule-dependent virus transport toward the perinuclear region, prior to nucleus translocation and integration into host genome.</text>
</comment>
<comment type="function">
    <text evidence="1">Nucleocapsid protein p13 encapsulates and protects viral dimeric unspliced (genomic) RNA. Binds these RNAs through its zinc fingers (By similarity).</text>
</comment>
<comment type="subunit">
    <text evidence="5">Interacts with host light chain cytoplasmic dynein DYNLL1; this interaction is critical for intracellular microtubule-dependent viral genome transport.</text>
</comment>
<comment type="subcellular location">
    <molecule>Matrix protein p16</molecule>
    <subcellularLocation>
        <location evidence="6">Virion</location>
    </subcellularLocation>
</comment>
<comment type="subcellular location">
    <molecule>Capsid protein p26</molecule>
    <subcellularLocation>
        <location evidence="6">Virion</location>
    </subcellularLocation>
</comment>
<comment type="subcellular location">
    <molecule>Nucleocapsid protein p13</molecule>
    <subcellularLocation>
        <location evidence="6">Virion</location>
    </subcellularLocation>
</comment>
<comment type="alternative products">
    <event type="ribosomal frameshifting"/>
    <isoform>
        <id>P19558-1</id>
        <name>Gag polyprotein</name>
        <sequence type="displayed"/>
    </isoform>
    <isoform>
        <id>P19560-1</id>
        <name>Gag-Pol polyprotein</name>
        <sequence type="external"/>
    </isoform>
    <text>This strategy of translation probably allows the virus to modulate the quantity of each viral protein.</text>
</comment>
<comment type="domain">
    <text evidence="1">Late-budding domains (L domains) are short sequence motifs essential for viral particle budding. They recruit proteins of the host ESCRT machinery (Endosomal Sorting Complex Required for Transport) or ESCRT-associated proteins. Gag polyprotein contains one L domain: a PTAP/PSAP motif, which interacts with the UEV domain of TSG101 (By similarity).</text>
</comment>
<comment type="miscellaneous">
    <text>The sequence shown is that of isolate R29-127.</text>
</comment>
<comment type="miscellaneous">
    <molecule>Isoform Gag polyprotein</molecule>
    <text>Produced by conventional translation.</text>
</comment>
<comment type="similarity">
    <text evidence="6">Belongs to the bovine lentivirus group gag polyprotein family.</text>
</comment>
<gene>
    <name type="primary">gag</name>
</gene>
<reference key="1">
    <citation type="journal article" date="1990" name="Virology">
        <title>Nucleotide sequence and genome organization of biologically active proviruses of the bovine immunodeficiency-like virus.</title>
        <authorList>
            <person name="Garvey K.J."/>
            <person name="Oberste M.S."/>
            <person name="Elser J.E."/>
            <person name="Braun M.J."/>
            <person name="Gonda M.A."/>
        </authorList>
    </citation>
    <scope>NUCLEOTIDE SEQUENCE [GENOMIC RNA]</scope>
    <source>
        <strain>Isolate R29-106</strain>
        <strain>Isolate R29-127</strain>
    </source>
</reference>
<reference key="2">
    <citation type="submission" date="1992-10" db="EMBL/GenBank/DDBJ databases">
        <title>Isolation and characterization of cDNAs encoding rev and tat of bovine immunodeficiency-like virus.</title>
        <authorList>
            <person name="Nadin-Davis S.A."/>
            <person name="Chang S.C."/>
            <person name="Roth J.A."/>
            <person name="Carpenter S."/>
        </authorList>
    </citation>
    <scope>NUCLEOTIDE SEQUENCE [MRNA]</scope>
    <source>
        <strain>Isolate R29-Nadin</strain>
    </source>
</reference>
<reference key="3">
    <citation type="journal article" date="1992" name="J. Virol.">
        <title>Immunological characterization of the gag gene products of bovine immunodeficiency virus.</title>
        <authorList>
            <person name="Battles J.K."/>
            <person name="Hu M.Y."/>
            <person name="Rasmussen L."/>
            <person name="Tobin G.J."/>
            <person name="Gonda M.A."/>
        </authorList>
    </citation>
    <scope>RIBOSOMAL FRAMESHIFT</scope>
    <scope>PROTEOLYTIC PROCESSING OF POLYPROTEIN</scope>
    <source>
        <strain>Isolate R29-127</strain>
    </source>
</reference>
<reference key="4">
    <citation type="journal article" date="2002" name="Clin. Diagn. Lab. Immunol.">
        <title>Unique epitope of bovine immunodeficiency virus gag protein spans the cleavage site between p16(MA) and p2L.</title>
        <authorList>
            <person name="Lu M."/>
            <person name="Zheng L."/>
            <person name="Mitchell K."/>
            <person name="Kapil S."/>
            <person name="Wood C."/>
            <person name="Minocha H."/>
        </authorList>
    </citation>
    <scope>PROTEOLYTIC PROCESSING OF POLYPROTEIN</scope>
</reference>
<reference key="5">
    <citation type="journal article" date="2004" name="J. Virol.">
        <title>Important role for the CA-NC spacer region in the assembly of bovine immunodeficiency virus Gag protein.</title>
        <authorList>
            <person name="Guo X."/>
            <person name="Hu J."/>
            <person name="Whitney J.B."/>
            <person name="Russell R.S."/>
            <person name="Liang C."/>
        </authorList>
    </citation>
    <scope>PROTEOLYTIC PROCESSING OF POLYPROTEIN</scope>
    <source>
        <strain>Isolate R29-127</strain>
    </source>
</reference>
<reference key="6">
    <citation type="journal article" date="2010" name="Cell. Microbiol.">
        <title>Microtubule-dependent retrograde transport of bovine immunodeficiency virus.</title>
        <authorList>
            <person name="Su Y."/>
            <person name="Qiao W."/>
            <person name="Guo T."/>
            <person name="Tan J."/>
            <person name="Li Z."/>
            <person name="Chen Y."/>
            <person name="Li X."/>
            <person name="Li Y."/>
            <person name="Zhou J."/>
            <person name="Chen Q."/>
        </authorList>
    </citation>
    <scope>FUNCTION</scope>
    <scope>INTERACTION WITH HOST DYNLL1</scope>
</reference>
<feature type="chain" id="PRO_0000272319" description="Gag polyprotein">
    <location>
        <begin position="1"/>
        <end position="476"/>
    </location>
</feature>
<feature type="chain" id="PRO_0000038763" description="Matrix protein p16" evidence="2">
    <location>
        <begin position="1"/>
        <end position="126"/>
    </location>
</feature>
<feature type="peptide" id="PRO_0000272320" description="p2L">
    <location>
        <begin position="127"/>
        <end position="148"/>
    </location>
</feature>
<feature type="chain" id="PRO_0000038764" description="Capsid protein p26" evidence="2">
    <location>
        <begin position="149"/>
        <end position="367"/>
    </location>
</feature>
<feature type="peptide" id="PRO_0000272321" description="p3">
    <location>
        <begin position="368"/>
        <end position="392"/>
    </location>
</feature>
<feature type="chain" id="PRO_0000038765" description="Nucleocapsid protein p13" evidence="2">
    <location>
        <begin position="393"/>
        <end status="unknown"/>
    </location>
</feature>
<feature type="chain" id="PRO_0000272322" description="p2" evidence="2">
    <location>
        <begin status="unknown"/>
        <end position="476"/>
    </location>
</feature>
<feature type="zinc finger region" description="CCHC-type 1" evidence="3">
    <location>
        <begin position="403"/>
        <end position="420"/>
    </location>
</feature>
<feature type="zinc finger region" description="CCHC-type 2" evidence="3">
    <location>
        <begin position="421"/>
        <end position="438"/>
    </location>
</feature>
<feature type="region of interest" description="Disordered" evidence="4">
    <location>
        <begin position="130"/>
        <end position="159"/>
    </location>
</feature>
<feature type="region of interest" description="Disordered" evidence="4">
    <location>
        <begin position="437"/>
        <end position="476"/>
    </location>
</feature>
<feature type="short sequence motif" description="PTAP/PSAP motif">
    <location>
        <begin position="468"/>
        <end position="471"/>
    </location>
</feature>
<feature type="compositionally biased region" description="Low complexity" evidence="4">
    <location>
        <begin position="130"/>
        <end position="147"/>
    </location>
</feature>
<feature type="compositionally biased region" description="Polar residues" evidence="4">
    <location>
        <begin position="450"/>
        <end position="468"/>
    </location>
</feature>
<feature type="site" description="Cleavage; by viral protease" evidence="2">
    <location>
        <begin position="126"/>
        <end position="127"/>
    </location>
</feature>
<feature type="site" description="Cleavage; by viral protease">
    <location>
        <begin position="148"/>
        <end position="149"/>
    </location>
</feature>
<feature type="site" description="Cleavage; by viral protease">
    <location>
        <begin position="367"/>
        <end position="368"/>
    </location>
</feature>
<feature type="site" description="Cleavage; by viral protease">
    <location>
        <begin position="392"/>
        <end position="393"/>
    </location>
</feature>
<feature type="sequence variant" description="In strain: Isolate R29-106 and Isolate R29-Nadin.">
    <original>P</original>
    <variation>L</variation>
    <location>
        <position position="17"/>
    </location>
</feature>
<feature type="sequence variant" description="In strain: Isolate R29-Nadin.">
    <original>N</original>
    <variation>D</variation>
    <location>
        <position position="67"/>
    </location>
</feature>
<feature type="sequence variant" description="In strain: Isolate R29-Nadin.">
    <original>R</original>
    <variation>K</variation>
    <location>
        <position position="71"/>
    </location>
</feature>
<feature type="sequence variant" description="In strain: Isolate R29-Nadin.">
    <original>AD</original>
    <variation>TE</variation>
    <location>
        <begin position="116"/>
        <end position="117"/>
    </location>
</feature>
<feature type="sequence variant" description="In strain: Isolate R29-106.">
    <original>D</original>
    <variation>E</variation>
    <location>
        <position position="117"/>
    </location>
</feature>
<feature type="sequence variant" description="In strain: Isolate R29-Nadin.">
    <original>V</original>
    <variation>I</variation>
    <location>
        <position position="180"/>
    </location>
</feature>
<feature type="sequence variant" description="In strain: Isolate R29-Nadin.">
    <original>R</original>
    <variation>K</variation>
    <location>
        <position position="416"/>
    </location>
</feature>
<accession>P19558</accession>
<accession>P19559</accession>
<accession>Q65590</accession>
<organismHost>
    <name type="scientific">Bos taurus</name>
    <name type="common">Bovine</name>
    <dbReference type="NCBI Taxonomy" id="9913"/>
</organismHost>
<sequence>MKRRELEKKLRKVRVTPQQDKYYTIGNLQWAIRMINLMGIKCVCDEECSAAEVALIITQFSALDLENSPIRGKEEVAIKNTLKVFWSLLAGYKPESTETALGYWEAFTYREREARADKEGEIKSIYPSLTQNTQNKKQTSNQTNTQSLPAITTQDGTPRFDPDLMKQLKIWSDATERNGVDLHAVNILGVITANLVQEEIKLLLNSTPKWRLDVQLIESKVREKENAHRTWKQHHPEAPKTDEIIGKGLSSAEQATLISVECRETFRQWVLQAAMEVAQAKHATPGPINIHQGPKEPYTDFINRLVAALEGMAAPETTKEYLLQHLSIDHANEDCQSILRPLGPNTPMEKKLEACRVVGSQKSKMQFLVAAMKEMGIQSPIPAVLPHTPEAYASQTSGPEDGRRCYGCGKTGHLKRNCKQQKCYHCGKPGHQARNCRSKNGKCSSAPYGQRSQPQNNFHQSNMSSVTPSAPPLILD</sequence>
<evidence type="ECO:0000250" key="1"/>
<evidence type="ECO:0000255" key="2"/>
<evidence type="ECO:0000255" key="3">
    <source>
        <dbReference type="PROSITE-ProRule" id="PRU00047"/>
    </source>
</evidence>
<evidence type="ECO:0000256" key="4">
    <source>
        <dbReference type="SAM" id="MobiDB-lite"/>
    </source>
</evidence>
<evidence type="ECO:0000269" key="5">
    <source>
    </source>
</evidence>
<evidence type="ECO:0000305" key="6"/>
<protein>
    <recommendedName>
        <fullName>Gag polyprotein</fullName>
    </recommendedName>
    <alternativeName>
        <fullName>Pr53Gag</fullName>
    </alternativeName>
    <component>
        <recommendedName>
            <fullName>Matrix protein p16</fullName>
            <shortName>MA</shortName>
        </recommendedName>
    </component>
    <component>
        <recommendedName>
            <fullName>p2L</fullName>
        </recommendedName>
    </component>
    <component>
        <recommendedName>
            <fullName>Capsid protein p26</fullName>
            <shortName>CA</shortName>
        </recommendedName>
    </component>
    <component>
        <recommendedName>
            <fullName>p3</fullName>
        </recommendedName>
    </component>
    <component>
        <recommendedName>
            <fullName>Nucleocapsid protein p13</fullName>
            <shortName>NC</shortName>
        </recommendedName>
    </component>
    <component>
        <recommendedName>
            <fullName>p2</fullName>
        </recommendedName>
    </component>
</protein>
<proteinExistence type="evidence at protein level"/>
<dbReference type="EMBL" id="M32690">
    <property type="protein sequence ID" value="AAA91270.1"/>
    <property type="molecule type" value="Genomic_RNA"/>
</dbReference>
<dbReference type="EMBL" id="L04974">
    <property type="protein sequence ID" value="AAA42763.1"/>
    <property type="molecule type" value="Genomic_DNA"/>
</dbReference>
<dbReference type="PIR" id="A34742">
    <property type="entry name" value="FOLJBT"/>
</dbReference>
<dbReference type="RefSeq" id="NP_040562.1">
    <property type="nucleotide sequence ID" value="NC_001413.1"/>
</dbReference>
<dbReference type="SMR" id="P19558"/>
<dbReference type="GeneID" id="1489970"/>
<dbReference type="KEGG" id="vg:1489970"/>
<dbReference type="PRO" id="PR:P19558"/>
<dbReference type="Proteomes" id="UP000243495">
    <property type="component" value="Segment"/>
</dbReference>
<dbReference type="GO" id="GO:0043657">
    <property type="term" value="C:host cell"/>
    <property type="evidence" value="ECO:0007669"/>
    <property type="project" value="GOC"/>
</dbReference>
<dbReference type="GO" id="GO:0019013">
    <property type="term" value="C:viral nucleocapsid"/>
    <property type="evidence" value="ECO:0007669"/>
    <property type="project" value="UniProtKB-KW"/>
</dbReference>
<dbReference type="GO" id="GO:0003676">
    <property type="term" value="F:nucleic acid binding"/>
    <property type="evidence" value="ECO:0007669"/>
    <property type="project" value="InterPro"/>
</dbReference>
<dbReference type="GO" id="GO:0039660">
    <property type="term" value="F:structural constituent of virion"/>
    <property type="evidence" value="ECO:0007669"/>
    <property type="project" value="UniProtKB-KW"/>
</dbReference>
<dbReference type="GO" id="GO:0008270">
    <property type="term" value="F:zinc ion binding"/>
    <property type="evidence" value="ECO:0007669"/>
    <property type="project" value="UniProtKB-KW"/>
</dbReference>
<dbReference type="GO" id="GO:0075521">
    <property type="term" value="P:microtubule-dependent intracellular transport of viral material towards nucleus"/>
    <property type="evidence" value="ECO:0007669"/>
    <property type="project" value="UniProtKB-KW"/>
</dbReference>
<dbReference type="GO" id="GO:0046718">
    <property type="term" value="P:symbiont entry into host cell"/>
    <property type="evidence" value="ECO:0007669"/>
    <property type="project" value="UniProtKB-KW"/>
</dbReference>
<dbReference type="GO" id="GO:0039702">
    <property type="term" value="P:viral budding via host ESCRT complex"/>
    <property type="evidence" value="ECO:0007669"/>
    <property type="project" value="UniProtKB-KW"/>
</dbReference>
<dbReference type="GO" id="GO:0075523">
    <property type="term" value="P:viral translational frameshifting"/>
    <property type="evidence" value="ECO:0007669"/>
    <property type="project" value="UniProtKB-KW"/>
</dbReference>
<dbReference type="Gene3D" id="1.10.1200.30">
    <property type="match status" value="1"/>
</dbReference>
<dbReference type="Gene3D" id="1.10.375.10">
    <property type="entry name" value="Human Immunodeficiency Virus Type 1 Capsid Protein"/>
    <property type="match status" value="1"/>
</dbReference>
<dbReference type="Gene3D" id="4.10.60.10">
    <property type="entry name" value="Zinc finger, CCHC-type"/>
    <property type="match status" value="1"/>
</dbReference>
<dbReference type="InterPro" id="IPR045345">
    <property type="entry name" value="Gag_p24_C"/>
</dbReference>
<dbReference type="InterPro" id="IPR050195">
    <property type="entry name" value="Primate_lentivir_Gag_pol-like"/>
</dbReference>
<dbReference type="InterPro" id="IPR008916">
    <property type="entry name" value="Retrov_capsid_C"/>
</dbReference>
<dbReference type="InterPro" id="IPR008919">
    <property type="entry name" value="Retrov_capsid_N"/>
</dbReference>
<dbReference type="InterPro" id="IPR001878">
    <property type="entry name" value="Znf_CCHC"/>
</dbReference>
<dbReference type="InterPro" id="IPR036875">
    <property type="entry name" value="Znf_CCHC_sf"/>
</dbReference>
<dbReference type="PANTHER" id="PTHR40389">
    <property type="entry name" value="ENDOGENOUS RETROVIRUS GROUP K MEMBER 24 GAG POLYPROTEIN-RELATED"/>
    <property type="match status" value="1"/>
</dbReference>
<dbReference type="PANTHER" id="PTHR40389:SF2">
    <property type="entry name" value="ENDOGENOUS RETROVIRUS GROUP K MEMBER 24 GAG POLYPROTEIN-RELATED"/>
    <property type="match status" value="1"/>
</dbReference>
<dbReference type="Pfam" id="PF19317">
    <property type="entry name" value="Gag_p24_C"/>
    <property type="match status" value="1"/>
</dbReference>
<dbReference type="Pfam" id="PF00098">
    <property type="entry name" value="zf-CCHC"/>
    <property type="match status" value="2"/>
</dbReference>
<dbReference type="SMART" id="SM00343">
    <property type="entry name" value="ZnF_C2HC"/>
    <property type="match status" value="2"/>
</dbReference>
<dbReference type="SUPFAM" id="SSF47353">
    <property type="entry name" value="Retrovirus capsid dimerization domain-like"/>
    <property type="match status" value="1"/>
</dbReference>
<dbReference type="SUPFAM" id="SSF47943">
    <property type="entry name" value="Retrovirus capsid protein, N-terminal core domain"/>
    <property type="match status" value="1"/>
</dbReference>
<dbReference type="SUPFAM" id="SSF57756">
    <property type="entry name" value="Retrovirus zinc finger-like domains"/>
    <property type="match status" value="1"/>
</dbReference>
<dbReference type="PROSITE" id="PS50158">
    <property type="entry name" value="ZF_CCHC"/>
    <property type="match status" value="2"/>
</dbReference>